<proteinExistence type="evidence at transcript level"/>
<accession>Q5XI42</accession>
<comment type="function">
    <text evidence="2">Oxidizes medium and long chain saturated and unsaturated fatty aldehydes generated in the plasma membrane into non-toxic fatty acids. May have a protective role against the cytotoxicity induced by lipid peroxidation. Short-chain fatty aldehydes are not good substrates. Can use both NADP(+) and NAD(+) as electron acceptor in vitro, however in vivo preference will depend on their tissue levels. Low activity towards acetaldehyde and 3,4-dihydroxyphenylacetaldehyde. Able to metabolize aromatic aldehydes such as benzaldehyde to their acid form.</text>
</comment>
<comment type="catalytic activity">
    <reaction evidence="2">
        <text>an aldehyde + NAD(+) + H2O = a carboxylate + NADH + 2 H(+)</text>
        <dbReference type="Rhea" id="RHEA:16185"/>
        <dbReference type="ChEBI" id="CHEBI:15377"/>
        <dbReference type="ChEBI" id="CHEBI:15378"/>
        <dbReference type="ChEBI" id="CHEBI:17478"/>
        <dbReference type="ChEBI" id="CHEBI:29067"/>
        <dbReference type="ChEBI" id="CHEBI:57540"/>
        <dbReference type="ChEBI" id="CHEBI:57945"/>
        <dbReference type="EC" id="1.2.1.5"/>
    </reaction>
    <physiologicalReaction direction="left-to-right" evidence="2">
        <dbReference type="Rhea" id="RHEA:16186"/>
    </physiologicalReaction>
</comment>
<comment type="catalytic activity">
    <reaction evidence="2">
        <text>a long-chain fatty aldehyde + NAD(+) + H2O = a long-chain fatty acid + NADH + 2 H(+)</text>
        <dbReference type="Rhea" id="RHEA:10652"/>
        <dbReference type="ChEBI" id="CHEBI:15377"/>
        <dbReference type="ChEBI" id="CHEBI:15378"/>
        <dbReference type="ChEBI" id="CHEBI:17176"/>
        <dbReference type="ChEBI" id="CHEBI:57540"/>
        <dbReference type="ChEBI" id="CHEBI:57560"/>
        <dbReference type="ChEBI" id="CHEBI:57945"/>
        <dbReference type="EC" id="1.2.1.48"/>
    </reaction>
    <physiologicalReaction direction="left-to-right" evidence="2">
        <dbReference type="Rhea" id="RHEA:10653"/>
    </physiologicalReaction>
</comment>
<comment type="catalytic activity">
    <reaction evidence="2">
        <text>a medium-chain fatty aldehyde + NAD(+) + H2O = a medium-chain fatty acid + NADH + 2 H(+)</text>
        <dbReference type="Rhea" id="RHEA:69763"/>
        <dbReference type="ChEBI" id="CHEBI:15377"/>
        <dbReference type="ChEBI" id="CHEBI:15378"/>
        <dbReference type="ChEBI" id="CHEBI:57540"/>
        <dbReference type="ChEBI" id="CHEBI:57945"/>
        <dbReference type="ChEBI" id="CHEBI:59558"/>
        <dbReference type="ChEBI" id="CHEBI:142621"/>
    </reaction>
    <physiologicalReaction direction="left-to-right" evidence="2">
        <dbReference type="Rhea" id="RHEA:69764"/>
    </physiologicalReaction>
</comment>
<comment type="catalytic activity">
    <reaction evidence="2">
        <text>octanal + NAD(+) + H2O = octanoate + NADH + 2 H(+)</text>
        <dbReference type="Rhea" id="RHEA:44100"/>
        <dbReference type="ChEBI" id="CHEBI:15377"/>
        <dbReference type="ChEBI" id="CHEBI:15378"/>
        <dbReference type="ChEBI" id="CHEBI:17935"/>
        <dbReference type="ChEBI" id="CHEBI:25646"/>
        <dbReference type="ChEBI" id="CHEBI:57540"/>
        <dbReference type="ChEBI" id="CHEBI:57945"/>
    </reaction>
    <physiologicalReaction direction="left-to-right" evidence="2">
        <dbReference type="Rhea" id="RHEA:44101"/>
    </physiologicalReaction>
</comment>
<comment type="catalytic activity">
    <reaction evidence="2">
        <text>nonanal + NAD(+) + H2O = nonanoate + NADH + 2 H(+)</text>
        <dbReference type="Rhea" id="RHEA:69759"/>
        <dbReference type="ChEBI" id="CHEBI:15377"/>
        <dbReference type="ChEBI" id="CHEBI:15378"/>
        <dbReference type="ChEBI" id="CHEBI:32361"/>
        <dbReference type="ChEBI" id="CHEBI:57540"/>
        <dbReference type="ChEBI" id="CHEBI:57945"/>
        <dbReference type="ChEBI" id="CHEBI:84268"/>
    </reaction>
    <physiologicalReaction direction="left-to-right" evidence="2">
        <dbReference type="Rhea" id="RHEA:69760"/>
    </physiologicalReaction>
</comment>
<comment type="catalytic activity">
    <reaction evidence="2">
        <text>hexadecanoate + NADH + 2 H(+) = hexadecanal + NAD(+) + H2O</text>
        <dbReference type="Rhea" id="RHEA:33739"/>
        <dbReference type="ChEBI" id="CHEBI:7896"/>
        <dbReference type="ChEBI" id="CHEBI:15377"/>
        <dbReference type="ChEBI" id="CHEBI:15378"/>
        <dbReference type="ChEBI" id="CHEBI:17600"/>
        <dbReference type="ChEBI" id="CHEBI:57540"/>
        <dbReference type="ChEBI" id="CHEBI:57945"/>
    </reaction>
    <physiologicalReaction direction="right-to-left" evidence="2">
        <dbReference type="Rhea" id="RHEA:33741"/>
    </physiologicalReaction>
</comment>
<comment type="catalytic activity">
    <reaction evidence="2">
        <text>(2E)-octenal + NAD(+) + H2O = (2E)-octenoate + NADH + 2 H(+)</text>
        <dbReference type="Rhea" id="RHEA:59920"/>
        <dbReference type="ChEBI" id="CHEBI:15377"/>
        <dbReference type="ChEBI" id="CHEBI:15378"/>
        <dbReference type="ChEBI" id="CHEBI:57540"/>
        <dbReference type="ChEBI" id="CHEBI:57945"/>
        <dbReference type="ChEBI" id="CHEBI:61748"/>
        <dbReference type="ChEBI" id="CHEBI:143526"/>
    </reaction>
    <physiologicalReaction direction="left-to-right" evidence="2">
        <dbReference type="Rhea" id="RHEA:59921"/>
    </physiologicalReaction>
</comment>
<comment type="catalytic activity">
    <reaction evidence="2">
        <text>(E)-non-2-enal + NAD(+) + H2O = (E)-non-2-enoate + NADH + 2 H(+)</text>
        <dbReference type="Rhea" id="RHEA:69767"/>
        <dbReference type="ChEBI" id="CHEBI:15377"/>
        <dbReference type="ChEBI" id="CHEBI:15378"/>
        <dbReference type="ChEBI" id="CHEBI:57540"/>
        <dbReference type="ChEBI" id="CHEBI:57945"/>
        <dbReference type="ChEBI" id="CHEBI:142592"/>
        <dbReference type="ChEBI" id="CHEBI:143908"/>
    </reaction>
    <physiologicalReaction direction="left-to-right" evidence="2">
        <dbReference type="Rhea" id="RHEA:69768"/>
    </physiologicalReaction>
</comment>
<comment type="catalytic activity">
    <reaction evidence="2">
        <text>(E)-4-hydroxynon-2-enal + NAD(+) + H2O = (E)-4-hydroxynon-2-enoate + NADH + 2 H(+)</text>
        <dbReference type="Rhea" id="RHEA:67248"/>
        <dbReference type="ChEBI" id="CHEBI:15377"/>
        <dbReference type="ChEBI" id="CHEBI:15378"/>
        <dbReference type="ChEBI" id="CHEBI:57540"/>
        <dbReference type="ChEBI" id="CHEBI:57945"/>
        <dbReference type="ChEBI" id="CHEBI:58968"/>
        <dbReference type="ChEBI" id="CHEBI:142920"/>
    </reaction>
    <physiologicalReaction direction="left-to-right" evidence="2">
        <dbReference type="Rhea" id="RHEA:67249"/>
    </physiologicalReaction>
</comment>
<comment type="catalytic activity">
    <reaction evidence="2">
        <text>(2E)-hexadecenal + NAD(+) + H2O = (E)-hexadec-2-enoate + NADH + 2 H(+)</text>
        <dbReference type="Rhea" id="RHEA:36135"/>
        <dbReference type="ChEBI" id="CHEBI:15377"/>
        <dbReference type="ChEBI" id="CHEBI:15378"/>
        <dbReference type="ChEBI" id="CHEBI:17585"/>
        <dbReference type="ChEBI" id="CHEBI:57540"/>
        <dbReference type="ChEBI" id="CHEBI:57945"/>
        <dbReference type="ChEBI" id="CHEBI:72745"/>
    </reaction>
    <physiologicalReaction direction="left-to-right" evidence="2">
        <dbReference type="Rhea" id="RHEA:36136"/>
    </physiologicalReaction>
</comment>
<comment type="catalytic activity">
    <reaction evidence="2">
        <text>benzaldehyde + NAD(+) + H2O = benzoate + NADH + 2 H(+)</text>
        <dbReference type="Rhea" id="RHEA:11840"/>
        <dbReference type="ChEBI" id="CHEBI:15377"/>
        <dbReference type="ChEBI" id="CHEBI:15378"/>
        <dbReference type="ChEBI" id="CHEBI:16150"/>
        <dbReference type="ChEBI" id="CHEBI:17169"/>
        <dbReference type="ChEBI" id="CHEBI:57540"/>
        <dbReference type="ChEBI" id="CHEBI:57945"/>
        <dbReference type="EC" id="1.2.1.28"/>
    </reaction>
    <physiologicalReaction direction="left-to-right" evidence="2">
        <dbReference type="Rhea" id="RHEA:11841"/>
    </physiologicalReaction>
</comment>
<comment type="catalytic activity">
    <reaction evidence="2">
        <text>an aldehyde + NADP(+) + H2O = a carboxylate + NADPH + 2 H(+)</text>
        <dbReference type="Rhea" id="RHEA:11888"/>
        <dbReference type="ChEBI" id="CHEBI:15377"/>
        <dbReference type="ChEBI" id="CHEBI:15378"/>
        <dbReference type="ChEBI" id="CHEBI:17478"/>
        <dbReference type="ChEBI" id="CHEBI:29067"/>
        <dbReference type="ChEBI" id="CHEBI:57783"/>
        <dbReference type="ChEBI" id="CHEBI:58349"/>
        <dbReference type="EC" id="1.2.1.5"/>
    </reaction>
    <physiologicalReaction direction="left-to-right" evidence="2">
        <dbReference type="Rhea" id="RHEA:11889"/>
    </physiologicalReaction>
</comment>
<comment type="catalytic activity">
    <reaction evidence="2">
        <text>a medium-chain fatty aldehyde + NADP(+) + H2O = a medium-chain fatty acid + NADPH + 2 H(+)</text>
        <dbReference type="Rhea" id="RHEA:80815"/>
        <dbReference type="ChEBI" id="CHEBI:15377"/>
        <dbReference type="ChEBI" id="CHEBI:15378"/>
        <dbReference type="ChEBI" id="CHEBI:57783"/>
        <dbReference type="ChEBI" id="CHEBI:58349"/>
        <dbReference type="ChEBI" id="CHEBI:59558"/>
        <dbReference type="ChEBI" id="CHEBI:142621"/>
    </reaction>
    <physiologicalReaction direction="left-to-right" evidence="2">
        <dbReference type="Rhea" id="RHEA:80816"/>
    </physiologicalReaction>
</comment>
<comment type="catalytic activity">
    <reaction evidence="2">
        <text>hexanal + NADP(+) + H2O = hexanoate + NADPH + 2 H(+)</text>
        <dbReference type="Rhea" id="RHEA:59908"/>
        <dbReference type="ChEBI" id="CHEBI:15377"/>
        <dbReference type="ChEBI" id="CHEBI:15378"/>
        <dbReference type="ChEBI" id="CHEBI:17120"/>
        <dbReference type="ChEBI" id="CHEBI:57783"/>
        <dbReference type="ChEBI" id="CHEBI:58349"/>
        <dbReference type="ChEBI" id="CHEBI:88528"/>
    </reaction>
    <physiologicalReaction direction="left-to-right" evidence="2">
        <dbReference type="Rhea" id="RHEA:59909"/>
    </physiologicalReaction>
</comment>
<comment type="catalytic activity">
    <reaction evidence="2">
        <text>octanal + NADP(+) + H2O = octanoate + NADPH + 2 H(+)</text>
        <dbReference type="Rhea" id="RHEA:59904"/>
        <dbReference type="ChEBI" id="CHEBI:15377"/>
        <dbReference type="ChEBI" id="CHEBI:15378"/>
        <dbReference type="ChEBI" id="CHEBI:17935"/>
        <dbReference type="ChEBI" id="CHEBI:25646"/>
        <dbReference type="ChEBI" id="CHEBI:57783"/>
        <dbReference type="ChEBI" id="CHEBI:58349"/>
    </reaction>
    <physiologicalReaction direction="left-to-right" evidence="2">
        <dbReference type="Rhea" id="RHEA:59905"/>
    </physiologicalReaction>
</comment>
<comment type="catalytic activity">
    <reaction evidence="2">
        <text>nonanal + NADP(+) + H2O = nonanoate + NADPH + 2 H(+)</text>
        <dbReference type="Rhea" id="RHEA:80819"/>
        <dbReference type="ChEBI" id="CHEBI:15377"/>
        <dbReference type="ChEBI" id="CHEBI:15378"/>
        <dbReference type="ChEBI" id="CHEBI:32361"/>
        <dbReference type="ChEBI" id="CHEBI:57783"/>
        <dbReference type="ChEBI" id="CHEBI:58349"/>
        <dbReference type="ChEBI" id="CHEBI:84268"/>
    </reaction>
    <physiologicalReaction direction="left-to-right" evidence="2">
        <dbReference type="Rhea" id="RHEA:80820"/>
    </physiologicalReaction>
</comment>
<comment type="catalytic activity">
    <reaction evidence="2">
        <text>(2E)-octenal + NADP(+) + H2O = (2E)-octenoate + NADPH + 2 H(+)</text>
        <dbReference type="Rhea" id="RHEA:59916"/>
        <dbReference type="ChEBI" id="CHEBI:15377"/>
        <dbReference type="ChEBI" id="CHEBI:15378"/>
        <dbReference type="ChEBI" id="CHEBI:57783"/>
        <dbReference type="ChEBI" id="CHEBI:58349"/>
        <dbReference type="ChEBI" id="CHEBI:61748"/>
        <dbReference type="ChEBI" id="CHEBI:143526"/>
    </reaction>
    <physiologicalReaction direction="left-to-right" evidence="2">
        <dbReference type="Rhea" id="RHEA:59917"/>
    </physiologicalReaction>
</comment>
<comment type="catalytic activity">
    <reaction evidence="2">
        <text>(E)-non-2-enal + NADP(+) + H2O = (E)-non-2-enoate + NADPH + 2 H(+)</text>
        <dbReference type="Rhea" id="RHEA:60692"/>
        <dbReference type="ChEBI" id="CHEBI:15377"/>
        <dbReference type="ChEBI" id="CHEBI:15378"/>
        <dbReference type="ChEBI" id="CHEBI:57783"/>
        <dbReference type="ChEBI" id="CHEBI:58349"/>
        <dbReference type="ChEBI" id="CHEBI:142592"/>
        <dbReference type="ChEBI" id="CHEBI:143908"/>
    </reaction>
    <physiologicalReaction direction="left-to-right" evidence="2">
        <dbReference type="Rhea" id="RHEA:60693"/>
    </physiologicalReaction>
</comment>
<comment type="catalytic activity">
    <reaction evidence="2">
        <text>(E)-4-hydroxynon-2-enal + NADP(+) + H2O = (E)-4-hydroxynon-2-enoate + NADPH + 2 H(+)</text>
        <dbReference type="Rhea" id="RHEA:59912"/>
        <dbReference type="ChEBI" id="CHEBI:15377"/>
        <dbReference type="ChEBI" id="CHEBI:15378"/>
        <dbReference type="ChEBI" id="CHEBI:57783"/>
        <dbReference type="ChEBI" id="CHEBI:58349"/>
        <dbReference type="ChEBI" id="CHEBI:58968"/>
        <dbReference type="ChEBI" id="CHEBI:142920"/>
    </reaction>
    <physiologicalReaction direction="left-to-right" evidence="2">
        <dbReference type="Rhea" id="RHEA:59913"/>
    </physiologicalReaction>
</comment>
<comment type="catalytic activity">
    <reaction evidence="2">
        <text>benzaldehyde + NADP(+) + H2O = benzoate + NADPH + 2 H(+)</text>
        <dbReference type="Rhea" id="RHEA:21660"/>
        <dbReference type="ChEBI" id="CHEBI:15377"/>
        <dbReference type="ChEBI" id="CHEBI:15378"/>
        <dbReference type="ChEBI" id="CHEBI:16150"/>
        <dbReference type="ChEBI" id="CHEBI:17169"/>
        <dbReference type="ChEBI" id="CHEBI:57783"/>
        <dbReference type="ChEBI" id="CHEBI:58349"/>
        <dbReference type="EC" id="1.2.1.7"/>
    </reaction>
    <physiologicalReaction direction="left-to-right" evidence="2">
        <dbReference type="Rhea" id="RHEA:21661"/>
    </physiologicalReaction>
</comment>
<comment type="pathway">
    <text>Alcohol metabolism; ethanol degradation; acetate from ethanol: step 2/2.</text>
</comment>
<comment type="subcellular location">
    <subcellularLocation>
        <location evidence="1">Cell membrane</location>
        <topology evidence="1">Lipid-anchor</topology>
    </subcellularLocation>
    <text evidence="1">Primarily in the plasma membrane as well as in some punctate structures in the cytoplasm.</text>
</comment>
<comment type="PTM">
    <text evidence="3">Dually lipidated in the C-terminus; prenylation occurs prior to, and is a prerequisite for palmitoylation. It is also required for activity towards long-chain substrates.</text>
</comment>
<comment type="similarity">
    <text evidence="4">Belongs to the aldehyde dehydrogenase family.</text>
</comment>
<evidence type="ECO:0000250" key="1"/>
<evidence type="ECO:0000250" key="2">
    <source>
        <dbReference type="UniProtKB" id="P43353"/>
    </source>
</evidence>
<evidence type="ECO:0000250" key="3">
    <source>
        <dbReference type="UniProtKB" id="Q80VQ0"/>
    </source>
</evidence>
<evidence type="ECO:0000305" key="4"/>
<sequence>MDSFEDKLQQLREAFNAGRTRSAEFRAAQLQGLSHFLRDNKQQLQEALAQDLHKSAFESEVSEIAISQAEVDLALRNLRSWMKDEKVSKNLATQLDSAFIRKEPFGLVLIIVPWNYPLNLTLVPLVGAIAAGNCVVLKPSEISKATEKILAEVLPRYLDQSCFAVVLGGPQETGQLLEHRFDYIFFTGNTYVGKIVMAAAAKHLTPITLELGGKNPCYVDDNCDPQTVANRVAWFRYFNAGQTCVAPDYVLCSQEMQERLVPALQNAITRFYGDNPQTSPNLGRIINQKHFERLQGLLGCGRVAIGGQSDEGERYIAPTVLVDVQETEPVMQEEIFGPILPLVTVTNLDEAIEFINRREKPLALYAFSKRSQVIKQVLARTSSGGFCGNDGFMHMTLSSLPFGGVGTSGMGRYHGKFSFDTFSNQRACLLRSPGMEKINDLRYPPYTSRNLRVLLVAMEKRCCSCTLL</sequence>
<protein>
    <recommendedName>
        <fullName>Aldehyde dehydrogenase family 3 member B1</fullName>
        <ecNumber evidence="2">1.2.1.28</ecNumber>
        <ecNumber evidence="2">1.2.1.5</ecNumber>
        <ecNumber evidence="2">1.2.1.7</ecNumber>
    </recommendedName>
    <alternativeName>
        <fullName>Aldehyde dehydrogenase 7</fullName>
    </alternativeName>
    <alternativeName>
        <fullName>Long-chain fatty aldehyde dehydrogenase</fullName>
        <ecNumber evidence="2">1.2.1.48</ecNumber>
    </alternativeName>
    <alternativeName>
        <fullName>Medium-chain fatty aldehyde dehydrogenase</fullName>
    </alternativeName>
</protein>
<reference key="1">
    <citation type="journal article" date="2004" name="Genome Res.">
        <title>The status, quality, and expansion of the NIH full-length cDNA project: the Mammalian Gene Collection (MGC).</title>
        <authorList>
            <consortium name="The MGC Project Team"/>
        </authorList>
    </citation>
    <scope>NUCLEOTIDE SEQUENCE [LARGE SCALE MRNA]</scope>
    <source>
        <strain>Brown Norway</strain>
        <tissue>Lung</tissue>
    </source>
</reference>
<organism>
    <name type="scientific">Rattus norvegicus</name>
    <name type="common">Rat</name>
    <dbReference type="NCBI Taxonomy" id="10116"/>
    <lineage>
        <taxon>Eukaryota</taxon>
        <taxon>Metazoa</taxon>
        <taxon>Chordata</taxon>
        <taxon>Craniata</taxon>
        <taxon>Vertebrata</taxon>
        <taxon>Euteleostomi</taxon>
        <taxon>Mammalia</taxon>
        <taxon>Eutheria</taxon>
        <taxon>Euarchontoglires</taxon>
        <taxon>Glires</taxon>
        <taxon>Rodentia</taxon>
        <taxon>Myomorpha</taxon>
        <taxon>Muroidea</taxon>
        <taxon>Muridae</taxon>
        <taxon>Murinae</taxon>
        <taxon>Rattus</taxon>
    </lineage>
</organism>
<feature type="chain" id="PRO_0000056483" description="Aldehyde dehydrogenase family 3 member B1">
    <location>
        <begin position="1"/>
        <end position="465"/>
    </location>
</feature>
<feature type="propeptide" id="PRO_0000424195" description="Removed in mature form" evidence="4">
    <location>
        <begin position="466"/>
        <end position="468"/>
    </location>
</feature>
<feature type="active site" evidence="1">
    <location>
        <position position="210"/>
    </location>
</feature>
<feature type="active site" evidence="1">
    <location>
        <position position="244"/>
    </location>
</feature>
<feature type="binding site" evidence="1">
    <location>
        <begin position="188"/>
        <end position="193"/>
    </location>
    <ligand>
        <name>NAD(+)</name>
        <dbReference type="ChEBI" id="CHEBI:57540"/>
    </ligand>
</feature>
<feature type="modified residue" description="N-acetylmethionine" evidence="2">
    <location>
        <position position="1"/>
    </location>
</feature>
<feature type="modified residue" description="Cysteine methyl ester" evidence="4">
    <location>
        <position position="465"/>
    </location>
</feature>
<feature type="lipid moiety-binding region" description="S-palmitoyl cysteine" evidence="3">
    <location>
        <position position="462"/>
    </location>
</feature>
<feature type="lipid moiety-binding region" description="S-palmitoyl cysteine" evidence="2">
    <location>
        <position position="463"/>
    </location>
</feature>
<feature type="lipid moiety-binding region" description="S-geranylgeranyl cysteine" evidence="2">
    <location>
        <position position="465"/>
    </location>
</feature>
<name>AL3B1_RAT</name>
<dbReference type="EC" id="1.2.1.28" evidence="2"/>
<dbReference type="EC" id="1.2.1.5" evidence="2"/>
<dbReference type="EC" id="1.2.1.7" evidence="2"/>
<dbReference type="EC" id="1.2.1.48" evidence="2"/>
<dbReference type="EMBL" id="BC083850">
    <property type="protein sequence ID" value="AAH83850.1"/>
    <property type="molecule type" value="mRNA"/>
</dbReference>
<dbReference type="RefSeq" id="NP_001006999.1">
    <property type="nucleotide sequence ID" value="NM_001006998.1"/>
</dbReference>
<dbReference type="RefSeq" id="XP_006230849.1">
    <property type="nucleotide sequence ID" value="XM_006230787.3"/>
</dbReference>
<dbReference type="RefSeq" id="XP_008758356.1">
    <property type="nucleotide sequence ID" value="XM_008760134.1"/>
</dbReference>
<dbReference type="RefSeq" id="XP_038935292.1">
    <property type="nucleotide sequence ID" value="XM_039079364.2"/>
</dbReference>
<dbReference type="RefSeq" id="XP_063120346.1">
    <property type="nucleotide sequence ID" value="XM_063264276.1"/>
</dbReference>
<dbReference type="RefSeq" id="XP_063120348.1">
    <property type="nucleotide sequence ID" value="XM_063264278.1"/>
</dbReference>
<dbReference type="SMR" id="Q5XI42"/>
<dbReference type="BioGRID" id="259282">
    <property type="interactions" value="1"/>
</dbReference>
<dbReference type="FunCoup" id="Q5XI42">
    <property type="interactions" value="786"/>
</dbReference>
<dbReference type="STRING" id="10116.ENSRNOP00000074371"/>
<dbReference type="PhosphoSitePlus" id="Q5XI42"/>
<dbReference type="SwissPalm" id="Q5XI42"/>
<dbReference type="PaxDb" id="10116-ENSRNOP00000023789"/>
<dbReference type="Ensembl" id="ENSRNOT00000023789.6">
    <property type="protein sequence ID" value="ENSRNOP00000023789.4"/>
    <property type="gene ID" value="ENSRNOG00000017512.8"/>
</dbReference>
<dbReference type="GeneID" id="309147"/>
<dbReference type="KEGG" id="rno:309147"/>
<dbReference type="UCSC" id="RGD:1359546">
    <property type="organism name" value="rat"/>
</dbReference>
<dbReference type="AGR" id="RGD:1359546"/>
<dbReference type="CTD" id="221"/>
<dbReference type="RGD" id="1359546">
    <property type="gene designation" value="Aldh3b1"/>
</dbReference>
<dbReference type="eggNOG" id="KOG2456">
    <property type="taxonomic scope" value="Eukaryota"/>
</dbReference>
<dbReference type="GeneTree" id="ENSGT00940000162915"/>
<dbReference type="HOGENOM" id="CLU_005391_3_1_1"/>
<dbReference type="InParanoid" id="Q5XI42"/>
<dbReference type="PhylomeDB" id="Q5XI42"/>
<dbReference type="TreeFam" id="TF314264"/>
<dbReference type="Reactome" id="R-RNO-6798695">
    <property type="pathway name" value="Neutrophil degranulation"/>
</dbReference>
<dbReference type="Reactome" id="R-RNO-9845614">
    <property type="pathway name" value="Sphingolipid catabolism"/>
</dbReference>
<dbReference type="UniPathway" id="UPA00780">
    <property type="reaction ID" value="UER00768"/>
</dbReference>
<dbReference type="PRO" id="PR:Q5XI42"/>
<dbReference type="Proteomes" id="UP000002494">
    <property type="component" value="Chromosome 1"/>
</dbReference>
<dbReference type="Bgee" id="ENSRNOG00000017512">
    <property type="expression patterns" value="Expressed in ovary and 19 other cell types or tissues"/>
</dbReference>
<dbReference type="ExpressionAtlas" id="Q5XI42">
    <property type="expression patterns" value="baseline and differential"/>
</dbReference>
<dbReference type="GO" id="GO:0005737">
    <property type="term" value="C:cytoplasm"/>
    <property type="evidence" value="ECO:0000266"/>
    <property type="project" value="RGD"/>
</dbReference>
<dbReference type="GO" id="GO:0005829">
    <property type="term" value="C:cytosol"/>
    <property type="evidence" value="ECO:0000266"/>
    <property type="project" value="RGD"/>
</dbReference>
<dbReference type="GO" id="GO:0005886">
    <property type="term" value="C:plasma membrane"/>
    <property type="evidence" value="ECO:0000266"/>
    <property type="project" value="RGD"/>
</dbReference>
<dbReference type="GO" id="GO:0004028">
    <property type="term" value="F:3-chloroallyl aldehyde dehydrogenase activity"/>
    <property type="evidence" value="ECO:0000318"/>
    <property type="project" value="GO_Central"/>
</dbReference>
<dbReference type="GO" id="GO:0004029">
    <property type="term" value="F:aldehyde dehydrogenase (NAD+) activity"/>
    <property type="evidence" value="ECO:0000266"/>
    <property type="project" value="RGD"/>
</dbReference>
<dbReference type="GO" id="GO:0004030">
    <property type="term" value="F:aldehyde dehydrogenase [NAD(P)+] activity"/>
    <property type="evidence" value="ECO:0000266"/>
    <property type="project" value="RGD"/>
</dbReference>
<dbReference type="GO" id="GO:0018479">
    <property type="term" value="F:benzaldehyde dehydrogenase (NAD+) activity"/>
    <property type="evidence" value="ECO:0007669"/>
    <property type="project" value="UniProtKB-EC"/>
</dbReference>
<dbReference type="GO" id="GO:0018477">
    <property type="term" value="F:benzaldehyde dehydrogenase (NADP+) activity"/>
    <property type="evidence" value="ECO:0007669"/>
    <property type="project" value="UniProtKB-EC"/>
</dbReference>
<dbReference type="GO" id="GO:0050061">
    <property type="term" value="F:long-chain fatty aldehyde dehydrogenase (NAD+) activity"/>
    <property type="evidence" value="ECO:0007669"/>
    <property type="project" value="RHEA"/>
</dbReference>
<dbReference type="GO" id="GO:0052814">
    <property type="term" value="F:medium-chain fatty aldehyde dehydrogenase (NAD+) activity"/>
    <property type="evidence" value="ECO:0007669"/>
    <property type="project" value="RHEA"/>
</dbReference>
<dbReference type="GO" id="GO:0046185">
    <property type="term" value="P:aldehyde catabolic process"/>
    <property type="evidence" value="ECO:0000266"/>
    <property type="project" value="RGD"/>
</dbReference>
<dbReference type="GO" id="GO:0006081">
    <property type="term" value="P:aldehyde metabolic process"/>
    <property type="evidence" value="ECO:0000318"/>
    <property type="project" value="GO_Central"/>
</dbReference>
<dbReference type="GO" id="GO:0034599">
    <property type="term" value="P:cellular response to oxidative stress"/>
    <property type="evidence" value="ECO:0000266"/>
    <property type="project" value="RGD"/>
</dbReference>
<dbReference type="GO" id="GO:0006068">
    <property type="term" value="P:ethanol catabolic process"/>
    <property type="evidence" value="ECO:0007669"/>
    <property type="project" value="UniProtKB-UniPathway"/>
</dbReference>
<dbReference type="GO" id="GO:0006629">
    <property type="term" value="P:lipid metabolic process"/>
    <property type="evidence" value="ECO:0007669"/>
    <property type="project" value="UniProtKB-KW"/>
</dbReference>
<dbReference type="GO" id="GO:0006979">
    <property type="term" value="P:response to oxidative stress"/>
    <property type="evidence" value="ECO:0000266"/>
    <property type="project" value="RGD"/>
</dbReference>
<dbReference type="CDD" id="cd07132">
    <property type="entry name" value="ALDH_F3AB"/>
    <property type="match status" value="1"/>
</dbReference>
<dbReference type="FunFam" id="3.40.309.10:FF:000003">
    <property type="entry name" value="Aldehyde dehydrogenase"/>
    <property type="match status" value="1"/>
</dbReference>
<dbReference type="FunFam" id="3.40.605.10:FF:000004">
    <property type="entry name" value="Aldehyde dehydrogenase"/>
    <property type="match status" value="1"/>
</dbReference>
<dbReference type="Gene3D" id="3.40.605.10">
    <property type="entry name" value="Aldehyde Dehydrogenase, Chain A, domain 1"/>
    <property type="match status" value="1"/>
</dbReference>
<dbReference type="Gene3D" id="3.40.309.10">
    <property type="entry name" value="Aldehyde Dehydrogenase, Chain A, domain 2"/>
    <property type="match status" value="1"/>
</dbReference>
<dbReference type="InterPro" id="IPR016161">
    <property type="entry name" value="Ald_DH/histidinol_DH"/>
</dbReference>
<dbReference type="InterPro" id="IPR016163">
    <property type="entry name" value="Ald_DH_C"/>
</dbReference>
<dbReference type="InterPro" id="IPR016160">
    <property type="entry name" value="Ald_DH_CS_CYS"/>
</dbReference>
<dbReference type="InterPro" id="IPR029510">
    <property type="entry name" value="Ald_DH_CS_GLU"/>
</dbReference>
<dbReference type="InterPro" id="IPR016162">
    <property type="entry name" value="Ald_DH_N"/>
</dbReference>
<dbReference type="InterPro" id="IPR015590">
    <property type="entry name" value="Aldehyde_DH_dom"/>
</dbReference>
<dbReference type="InterPro" id="IPR012394">
    <property type="entry name" value="Aldehyde_DH_NAD(P)"/>
</dbReference>
<dbReference type="PANTHER" id="PTHR43570">
    <property type="entry name" value="ALDEHYDE DEHYDROGENASE"/>
    <property type="match status" value="1"/>
</dbReference>
<dbReference type="PANTHER" id="PTHR43570:SF2">
    <property type="entry name" value="ALDEHYDE DEHYDROGENASE FAMILY 3 MEMBER B1"/>
    <property type="match status" value="1"/>
</dbReference>
<dbReference type="Pfam" id="PF00171">
    <property type="entry name" value="Aldedh"/>
    <property type="match status" value="1"/>
</dbReference>
<dbReference type="PIRSF" id="PIRSF036492">
    <property type="entry name" value="ALDH"/>
    <property type="match status" value="1"/>
</dbReference>
<dbReference type="SUPFAM" id="SSF53720">
    <property type="entry name" value="ALDH-like"/>
    <property type="match status" value="1"/>
</dbReference>
<dbReference type="PROSITE" id="PS00070">
    <property type="entry name" value="ALDEHYDE_DEHYDR_CYS"/>
    <property type="match status" value="1"/>
</dbReference>
<dbReference type="PROSITE" id="PS00687">
    <property type="entry name" value="ALDEHYDE_DEHYDR_GLU"/>
    <property type="match status" value="1"/>
</dbReference>
<gene>
    <name type="primary">Aldh3b1</name>
</gene>
<keyword id="KW-0007">Acetylation</keyword>
<keyword id="KW-1003">Cell membrane</keyword>
<keyword id="KW-0443">Lipid metabolism</keyword>
<keyword id="KW-0449">Lipoprotein</keyword>
<keyword id="KW-0472">Membrane</keyword>
<keyword id="KW-0488">Methylation</keyword>
<keyword id="KW-0520">NAD</keyword>
<keyword id="KW-0560">Oxidoreductase</keyword>
<keyword id="KW-0564">Palmitate</keyword>
<keyword id="KW-0636">Prenylation</keyword>
<keyword id="KW-1185">Reference proteome</keyword>